<organism>
    <name type="scientific">Saccharomyces cerevisiae (strain ATCC 204508 / S288c)</name>
    <name type="common">Baker's yeast</name>
    <dbReference type="NCBI Taxonomy" id="559292"/>
    <lineage>
        <taxon>Eukaryota</taxon>
        <taxon>Fungi</taxon>
        <taxon>Dikarya</taxon>
        <taxon>Ascomycota</taxon>
        <taxon>Saccharomycotina</taxon>
        <taxon>Saccharomycetes</taxon>
        <taxon>Saccharomycetales</taxon>
        <taxon>Saccharomycetaceae</taxon>
        <taxon>Saccharomyces</taxon>
    </lineage>
</organism>
<name>DGR1_YEAST</name>
<sequence>MQVGFVSQTNCRSFPACIVFLFQMSQRQRSFNANLRVFKSKCKKIYIG</sequence>
<reference key="1">
    <citation type="journal article" date="1997" name="Nature">
        <title>The nucleotide sequence of Saccharomyces cerevisiae chromosome XIV and its evolutionary implications.</title>
        <authorList>
            <person name="Philippsen P."/>
            <person name="Kleine K."/>
            <person name="Poehlmann R."/>
            <person name="Duesterhoeft A."/>
            <person name="Hamberg K."/>
            <person name="Hegemann J.H."/>
            <person name="Obermaier B."/>
            <person name="Urrestarazu L.A."/>
            <person name="Aert R."/>
            <person name="Albermann K."/>
            <person name="Altmann R."/>
            <person name="Andre B."/>
            <person name="Baladron V."/>
            <person name="Ballesta J.P.G."/>
            <person name="Becam A.-M."/>
            <person name="Beinhauer J.D."/>
            <person name="Boskovic J."/>
            <person name="Buitrago M.J."/>
            <person name="Bussereau F."/>
            <person name="Coster F."/>
            <person name="Crouzet M."/>
            <person name="D'Angelo M."/>
            <person name="Dal Pero F."/>
            <person name="De Antoni A."/>
            <person name="del Rey F."/>
            <person name="Doignon F."/>
            <person name="Domdey H."/>
            <person name="Dubois E."/>
            <person name="Fiedler T.A."/>
            <person name="Fleig U."/>
            <person name="Floeth M."/>
            <person name="Fritz C."/>
            <person name="Gaillardin C."/>
            <person name="Garcia-Cantalejo J.M."/>
            <person name="Glansdorff N."/>
            <person name="Goffeau A."/>
            <person name="Gueldener U."/>
            <person name="Herbert C.J."/>
            <person name="Heumann K."/>
            <person name="Heuss-Neitzel D."/>
            <person name="Hilbert H."/>
            <person name="Hinni K."/>
            <person name="Iraqui Houssaini I."/>
            <person name="Jacquet M."/>
            <person name="Jimenez A."/>
            <person name="Jonniaux J.-L."/>
            <person name="Karpfinger-Hartl L."/>
            <person name="Lanfranchi G."/>
            <person name="Lepingle A."/>
            <person name="Levesque H."/>
            <person name="Lyck R."/>
            <person name="Maftahi M."/>
            <person name="Mallet L."/>
            <person name="Maurer C.T.C."/>
            <person name="Messenguy F."/>
            <person name="Mewes H.-W."/>
            <person name="Moestl D."/>
            <person name="Nasr F."/>
            <person name="Nicaud J.-M."/>
            <person name="Niedenthal R.K."/>
            <person name="Pandolfo D."/>
            <person name="Pierard A."/>
            <person name="Piravandi E."/>
            <person name="Planta R.J."/>
            <person name="Pohl T.M."/>
            <person name="Purnelle B."/>
            <person name="Rebischung C."/>
            <person name="Remacha M.A."/>
            <person name="Revuelta J.L."/>
            <person name="Rinke M."/>
            <person name="Saiz J.E."/>
            <person name="Sartorello F."/>
            <person name="Scherens B."/>
            <person name="Sen-Gupta M."/>
            <person name="Soler-Mira A."/>
            <person name="Urbanus J.H.M."/>
            <person name="Valle G."/>
            <person name="Van Dyck L."/>
            <person name="Verhasselt P."/>
            <person name="Vierendeels F."/>
            <person name="Vissers S."/>
            <person name="Voet M."/>
            <person name="Volckaert G."/>
            <person name="Wach A."/>
            <person name="Wambutt R."/>
            <person name="Wedler H."/>
            <person name="Zollner A."/>
            <person name="Hani J."/>
        </authorList>
    </citation>
    <scope>NUCLEOTIDE SEQUENCE [LARGE SCALE GENOMIC DNA]</scope>
    <source>
        <strain>ATCC 204508 / S288c</strain>
    </source>
</reference>
<reference key="2">
    <citation type="journal article" date="2014" name="G3 (Bethesda)">
        <title>The reference genome sequence of Saccharomyces cerevisiae: Then and now.</title>
        <authorList>
            <person name="Engel S.R."/>
            <person name="Dietrich F.S."/>
            <person name="Fisk D.G."/>
            <person name="Binkley G."/>
            <person name="Balakrishnan R."/>
            <person name="Costanzo M.C."/>
            <person name="Dwight S.S."/>
            <person name="Hitz B.C."/>
            <person name="Karra K."/>
            <person name="Nash R.S."/>
            <person name="Weng S."/>
            <person name="Wong E.D."/>
            <person name="Lloyd P."/>
            <person name="Skrzypek M.S."/>
            <person name="Miyasato S.R."/>
            <person name="Simison M."/>
            <person name="Cherry J.M."/>
        </authorList>
    </citation>
    <scope>GENOME REANNOTATION</scope>
    <source>
        <strain>ATCC 204508 / S288c</strain>
    </source>
</reference>
<reference key="3">
    <citation type="journal article" date="2003" name="Genome Res.">
        <title>Systematic discovery of new genes in the Saccharomyces cerevisiae genome.</title>
        <authorList>
            <person name="Kessler M.M."/>
            <person name="Zeng Q."/>
            <person name="Hogan S."/>
            <person name="Cook R."/>
            <person name="Morales A.J."/>
            <person name="Cottarel G."/>
        </authorList>
    </citation>
    <scope>GENOME REANNOTATION</scope>
</reference>
<reference key="4">
    <citation type="journal article" date="2008" name="Proc. Natl. Acad. Sci. U.S.A.">
        <title>A catabolic block does not sufficiently explain how 2-deoxy-D-glucose inhibits cell growth.</title>
        <authorList>
            <person name="Ralser M."/>
            <person name="Wamelink M.M."/>
            <person name="Struys E.A."/>
            <person name="Joppich C."/>
            <person name="Krobitsch S."/>
            <person name="Jakobs C."/>
            <person name="Lehrach H."/>
        </authorList>
    </citation>
    <scope>DISRUPTION PHENOTYPE</scope>
</reference>
<accession>Q3E808</accession>
<accession>D6W153</accession>
<gene>
    <name type="primary">DGR1</name>
    <name type="ordered locus">YNL130C-A</name>
</gene>
<keyword id="KW-0496">Mitochondrion</keyword>
<keyword id="KW-1185">Reference proteome</keyword>
<keyword id="KW-0809">Transit peptide</keyword>
<evidence type="ECO:0000255" key="1"/>
<evidence type="ECO:0000269" key="2">
    <source>
    </source>
</evidence>
<evidence type="ECO:0000305" key="3"/>
<comment type="subcellular location">
    <subcellularLocation>
        <location evidence="3">Mitochondrion</location>
    </subcellularLocation>
</comment>
<comment type="disruption phenotype">
    <text evidence="2">Increases cellular tolerance to 2-deoxy-glucose.</text>
</comment>
<protein>
    <recommendedName>
        <fullName>2-deoxy-glucose resistant protein 1, mitochondrial</fullName>
    </recommendedName>
</protein>
<dbReference type="EMBL" id="Z71405">
    <property type="status" value="NOT_ANNOTATED_CDS"/>
    <property type="molecule type" value="Genomic_DNA"/>
</dbReference>
<dbReference type="EMBL" id="BK006947">
    <property type="protein sequence ID" value="DAA10419.1"/>
    <property type="molecule type" value="Genomic_DNA"/>
</dbReference>
<dbReference type="RefSeq" id="NP_878154.1">
    <property type="nucleotide sequence ID" value="NM_001184574.1"/>
</dbReference>
<dbReference type="BioGRID" id="37054">
    <property type="interactions" value="24"/>
</dbReference>
<dbReference type="FunCoup" id="Q3E808">
    <property type="interactions" value="5"/>
</dbReference>
<dbReference type="STRING" id="4932.YNL130C-A"/>
<dbReference type="PaxDb" id="4932-YNL130C-A"/>
<dbReference type="EnsemblFungi" id="YNL130C-A_mRNA">
    <property type="protein sequence ID" value="YNL130C-A"/>
    <property type="gene ID" value="YNL130C-A"/>
</dbReference>
<dbReference type="GeneID" id="1466512"/>
<dbReference type="KEGG" id="sce:YNL130C-A"/>
<dbReference type="AGR" id="SGD:S000028579"/>
<dbReference type="SGD" id="S000028579">
    <property type="gene designation" value="DGR1"/>
</dbReference>
<dbReference type="VEuPathDB" id="FungiDB:YNL130C-A"/>
<dbReference type="HOGENOM" id="CLU_3160240_0_0_1"/>
<dbReference type="InParanoid" id="Q3E808"/>
<dbReference type="BioCyc" id="YEAST:G3O-33409-MONOMER"/>
<dbReference type="BioGRID-ORCS" id="1466512">
    <property type="hits" value="2 hits in 10 CRISPR screens"/>
</dbReference>
<dbReference type="PRO" id="PR:Q3E808"/>
<dbReference type="Proteomes" id="UP000002311">
    <property type="component" value="Chromosome XIV"/>
</dbReference>
<dbReference type="GO" id="GO:0005739">
    <property type="term" value="C:mitochondrion"/>
    <property type="evidence" value="ECO:0007669"/>
    <property type="project" value="UniProtKB-SubCell"/>
</dbReference>
<feature type="transit peptide" description="Mitochondrion" evidence="1">
    <location>
        <begin position="1"/>
        <end position="28"/>
    </location>
</feature>
<feature type="chain" id="PRO_0000247800" description="2-deoxy-glucose resistant protein 1, mitochondrial">
    <location>
        <begin position="29"/>
        <end position="48"/>
    </location>
</feature>
<proteinExistence type="predicted"/>